<name>3L21_OXYSC</name>
<feature type="signal peptide" evidence="1">
    <location>
        <begin position="1"/>
        <end position="21"/>
    </location>
</feature>
<feature type="chain" id="PRO_5000279922" description="Long neurotoxin 1">
    <location>
        <begin position="22"/>
        <end position="92"/>
    </location>
</feature>
<feature type="disulfide bond" evidence="1">
    <location>
        <begin position="24"/>
        <end position="42"/>
    </location>
</feature>
<feature type="disulfide bond" evidence="1">
    <location>
        <begin position="35"/>
        <end position="63"/>
    </location>
</feature>
<feature type="disulfide bond" evidence="1">
    <location>
        <begin position="67"/>
        <end position="79"/>
    </location>
</feature>
<feature type="disulfide bond" evidence="1">
    <location>
        <begin position="80"/>
        <end position="85"/>
    </location>
</feature>
<feature type="strand" evidence="4">
    <location>
        <begin position="23"/>
        <end position="26"/>
    </location>
</feature>
<feature type="turn" evidence="4">
    <location>
        <begin position="27"/>
        <end position="30"/>
    </location>
</feature>
<feature type="strand" evidence="4">
    <location>
        <begin position="31"/>
        <end position="34"/>
    </location>
</feature>
<feature type="strand" evidence="4">
    <location>
        <begin position="41"/>
        <end position="48"/>
    </location>
</feature>
<feature type="helix" evidence="4">
    <location>
        <begin position="52"/>
        <end position="55"/>
    </location>
</feature>
<feature type="strand" evidence="4">
    <location>
        <begin position="57"/>
        <end position="66"/>
    </location>
</feature>
<feature type="strand" evidence="4">
    <location>
        <begin position="76"/>
        <end position="80"/>
    </location>
</feature>
<evidence type="ECO:0000250" key="1"/>
<evidence type="ECO:0000250" key="2">
    <source>
        <dbReference type="UniProtKB" id="P60615"/>
    </source>
</evidence>
<evidence type="ECO:0000305" key="3"/>
<evidence type="ECO:0007829" key="4">
    <source>
        <dbReference type="PDB" id="8D9Y"/>
    </source>
</evidence>
<keyword id="KW-0002">3D-structure</keyword>
<keyword id="KW-0008">Acetylcholine receptor inhibiting toxin</keyword>
<keyword id="KW-1015">Disulfide bond</keyword>
<keyword id="KW-0872">Ion channel impairing toxin</keyword>
<keyword id="KW-0528">Neurotoxin</keyword>
<keyword id="KW-0629">Postsynaptic neurotoxin</keyword>
<keyword id="KW-0964">Secreted</keyword>
<keyword id="KW-0732">Signal</keyword>
<keyword id="KW-0800">Toxin</keyword>
<accession>A8HDK9</accession>
<protein>
    <recommendedName>
        <fullName>Long neurotoxin 1</fullName>
        <shortName>LNTX-1</shortName>
    </recommendedName>
</protein>
<reference key="1">
    <citation type="journal article" date="2007" name="Cell. Mol. Life Sci.">
        <title>Distinct activities of novel neurotoxins from Australian venomous snakes for nicotinic acetylcholine receptors.</title>
        <authorList>
            <person name="St Pierre L."/>
            <person name="Fischer H."/>
            <person name="Adams D.J."/>
            <person name="Schenning M."/>
            <person name="Lavidis N."/>
            <person name="de Jersey J."/>
            <person name="Masci P.P."/>
            <person name="Lavin M.F."/>
        </authorList>
    </citation>
    <scope>NUCLEOTIDE SEQUENCE [MRNA]</scope>
    <source>
        <tissue>Venom gland</tissue>
    </source>
</reference>
<sequence length="92" mass="10183">MKTLLLTLVVVTIVCLDLGYTRRCFTTPSVRSERCPPGQEVCYTKTWTDGHGGSRGKRVDLGCAATCPTPKKKDIKIICCSTDNCNTFPKWP</sequence>
<proteinExistence type="evidence at protein level"/>
<dbReference type="EMBL" id="DQ917514">
    <property type="protein sequence ID" value="ABK63543.1"/>
    <property type="molecule type" value="mRNA"/>
</dbReference>
<dbReference type="PDB" id="8D9Y">
    <property type="method" value="X-ray"/>
    <property type="resolution" value="2.20 A"/>
    <property type="chains" value="I/J/K/L=22-92"/>
</dbReference>
<dbReference type="PDBsum" id="8D9Y"/>
<dbReference type="SMR" id="A8HDK9"/>
<dbReference type="GO" id="GO:0005576">
    <property type="term" value="C:extracellular region"/>
    <property type="evidence" value="ECO:0007669"/>
    <property type="project" value="UniProtKB-SubCell"/>
</dbReference>
<dbReference type="GO" id="GO:0030550">
    <property type="term" value="F:acetylcholine receptor inhibitor activity"/>
    <property type="evidence" value="ECO:0007669"/>
    <property type="project" value="UniProtKB-KW"/>
</dbReference>
<dbReference type="GO" id="GO:0099106">
    <property type="term" value="F:ion channel regulator activity"/>
    <property type="evidence" value="ECO:0007669"/>
    <property type="project" value="UniProtKB-KW"/>
</dbReference>
<dbReference type="GO" id="GO:0090729">
    <property type="term" value="F:toxin activity"/>
    <property type="evidence" value="ECO:0007669"/>
    <property type="project" value="UniProtKB-KW"/>
</dbReference>
<dbReference type="CDD" id="cd00206">
    <property type="entry name" value="TFP_snake_toxin"/>
    <property type="match status" value="1"/>
</dbReference>
<dbReference type="Gene3D" id="2.10.60.10">
    <property type="entry name" value="CD59"/>
    <property type="match status" value="1"/>
</dbReference>
<dbReference type="InterPro" id="IPR003571">
    <property type="entry name" value="Snake_3FTx"/>
</dbReference>
<dbReference type="InterPro" id="IPR045860">
    <property type="entry name" value="Snake_toxin-like_sf"/>
</dbReference>
<dbReference type="InterPro" id="IPR018354">
    <property type="entry name" value="Snake_toxin_con_site"/>
</dbReference>
<dbReference type="InterPro" id="IPR054131">
    <property type="entry name" value="Toxin_cobra-type"/>
</dbReference>
<dbReference type="Pfam" id="PF21947">
    <property type="entry name" value="Toxin_cobra-type"/>
    <property type="match status" value="1"/>
</dbReference>
<dbReference type="SUPFAM" id="SSF57302">
    <property type="entry name" value="Snake toxin-like"/>
    <property type="match status" value="1"/>
</dbReference>
<dbReference type="PROSITE" id="PS00272">
    <property type="entry name" value="SNAKE_TOXIN"/>
    <property type="match status" value="1"/>
</dbReference>
<organism>
    <name type="scientific">Oxyuranus scutellatus scutellatus</name>
    <name type="common">Australian taipan</name>
    <name type="synonym">Coastal taipan</name>
    <dbReference type="NCBI Taxonomy" id="8667"/>
    <lineage>
        <taxon>Eukaryota</taxon>
        <taxon>Metazoa</taxon>
        <taxon>Chordata</taxon>
        <taxon>Craniata</taxon>
        <taxon>Vertebrata</taxon>
        <taxon>Euteleostomi</taxon>
        <taxon>Lepidosauria</taxon>
        <taxon>Squamata</taxon>
        <taxon>Bifurcata</taxon>
        <taxon>Unidentata</taxon>
        <taxon>Episquamata</taxon>
        <taxon>Toxicofera</taxon>
        <taxon>Serpentes</taxon>
        <taxon>Colubroidea</taxon>
        <taxon>Elapidae</taxon>
        <taxon>Hydrophiinae</taxon>
        <taxon>Oxyuranus</taxon>
    </lineage>
</organism>
<comment type="function">
    <text evidence="2">Binds with high affinity to muscular (alpha-1/CHRNA1) and neuronal (alpha-7/CHRNA7) nicotinic acetylcholine receptor (nAChR) and inhibits acetylcholine from binding to the receptor, thereby impairing neuromuscular and neuronal transmission.</text>
</comment>
<comment type="subcellular location">
    <subcellularLocation>
        <location evidence="1">Secreted</location>
    </subcellularLocation>
</comment>
<comment type="tissue specificity">
    <text evidence="3">Expressed by the venom gland.</text>
</comment>
<comment type="similarity">
    <text evidence="3">Belongs to the three-finger toxin family. Long-chain subfamily. Type II alpha-neurotoxin sub-subfamily.</text>
</comment>